<name>Y1472_BRUAB</name>
<organism>
    <name type="scientific">Brucella abortus biovar 1 (strain 9-941)</name>
    <dbReference type="NCBI Taxonomy" id="262698"/>
    <lineage>
        <taxon>Bacteria</taxon>
        <taxon>Pseudomonadati</taxon>
        <taxon>Pseudomonadota</taxon>
        <taxon>Alphaproteobacteria</taxon>
        <taxon>Hyphomicrobiales</taxon>
        <taxon>Brucellaceae</taxon>
        <taxon>Brucella/Ochrobactrum group</taxon>
        <taxon>Brucella</taxon>
    </lineage>
</organism>
<comment type="similarity">
    <text evidence="1">Belongs to the UPF0260 family.</text>
</comment>
<dbReference type="EMBL" id="AE017223">
    <property type="protein sequence ID" value="AAX74800.1"/>
    <property type="molecule type" value="Genomic_DNA"/>
</dbReference>
<dbReference type="RefSeq" id="WP_002964583.1">
    <property type="nucleotide sequence ID" value="NC_006932.1"/>
</dbReference>
<dbReference type="EnsemblBacteria" id="AAX74800">
    <property type="protein sequence ID" value="AAX74800"/>
    <property type="gene ID" value="BruAb1_1472"/>
</dbReference>
<dbReference type="KEGG" id="bmb:BruAb1_1472"/>
<dbReference type="HOGENOM" id="CLU_109769_0_1_5"/>
<dbReference type="Proteomes" id="UP000000540">
    <property type="component" value="Chromosome I"/>
</dbReference>
<dbReference type="HAMAP" id="MF_00676">
    <property type="entry name" value="UPF0260"/>
    <property type="match status" value="1"/>
</dbReference>
<dbReference type="InterPro" id="IPR005358">
    <property type="entry name" value="Puta_zinc/iron-chelating_dom"/>
</dbReference>
<dbReference type="InterPro" id="IPR008228">
    <property type="entry name" value="UCP006173"/>
</dbReference>
<dbReference type="NCBIfam" id="NF003501">
    <property type="entry name" value="PRK05170.1-5"/>
    <property type="match status" value="1"/>
</dbReference>
<dbReference type="NCBIfam" id="NF003507">
    <property type="entry name" value="PRK05170.2-5"/>
    <property type="match status" value="1"/>
</dbReference>
<dbReference type="PANTHER" id="PTHR37421">
    <property type="entry name" value="UPF0260 PROTEIN YCGN"/>
    <property type="match status" value="1"/>
</dbReference>
<dbReference type="PANTHER" id="PTHR37421:SF1">
    <property type="entry name" value="UPF0260 PROTEIN YCGN"/>
    <property type="match status" value="1"/>
</dbReference>
<dbReference type="Pfam" id="PF03692">
    <property type="entry name" value="CxxCxxCC"/>
    <property type="match status" value="1"/>
</dbReference>
<dbReference type="PIRSF" id="PIRSF006173">
    <property type="entry name" value="UCP006173"/>
    <property type="match status" value="1"/>
</dbReference>
<evidence type="ECO:0000255" key="1">
    <source>
        <dbReference type="HAMAP-Rule" id="MF_00676"/>
    </source>
</evidence>
<reference key="1">
    <citation type="journal article" date="2005" name="J. Bacteriol.">
        <title>Completion of the genome sequence of Brucella abortus and comparison to the highly similar genomes of Brucella melitensis and Brucella suis.</title>
        <authorList>
            <person name="Halling S.M."/>
            <person name="Peterson-Burch B.D."/>
            <person name="Bricker B.J."/>
            <person name="Zuerner R.L."/>
            <person name="Qing Z."/>
            <person name="Li L.-L."/>
            <person name="Kapur V."/>
            <person name="Alt D.P."/>
            <person name="Olsen S.C."/>
        </authorList>
    </citation>
    <scope>NUCLEOTIDE SEQUENCE [LARGE SCALE GENOMIC DNA]</scope>
    <source>
        <strain>9-941</strain>
    </source>
</reference>
<sequence length="152" mass="17517">MTDKPFWQTKNLNQLTRSEWESLCDGCGQCCLHKLQDEDTDEIYWTSVACTLLNPETCQCRDYPNRKKTVPDCIFLTPEIVDEVDWLPVTCAYRLVAEGSDLYWWHPLVSGSPETVHEAGISVRGKVTAFDHDMQDDDDYLDHMVTPDKIAR</sequence>
<accession>Q57C34</accession>
<gene>
    <name type="ordered locus">BruAb1_1472</name>
</gene>
<protein>
    <recommendedName>
        <fullName evidence="1">UPF0260 protein BruAb1_1472</fullName>
    </recommendedName>
</protein>
<proteinExistence type="inferred from homology"/>
<feature type="chain" id="PRO_1000044789" description="UPF0260 protein BruAb1_1472">
    <location>
        <begin position="1"/>
        <end position="152"/>
    </location>
</feature>